<gene>
    <name evidence="1" type="primary">ribH</name>
    <name type="ordered locus">Patl_1314</name>
</gene>
<reference key="1">
    <citation type="submission" date="2006-06" db="EMBL/GenBank/DDBJ databases">
        <title>Complete sequence of Pseudoalteromonas atlantica T6c.</title>
        <authorList>
            <consortium name="US DOE Joint Genome Institute"/>
            <person name="Copeland A."/>
            <person name="Lucas S."/>
            <person name="Lapidus A."/>
            <person name="Barry K."/>
            <person name="Detter J.C."/>
            <person name="Glavina del Rio T."/>
            <person name="Hammon N."/>
            <person name="Israni S."/>
            <person name="Dalin E."/>
            <person name="Tice H."/>
            <person name="Pitluck S."/>
            <person name="Saunders E."/>
            <person name="Brettin T."/>
            <person name="Bruce D."/>
            <person name="Han C."/>
            <person name="Tapia R."/>
            <person name="Gilna P."/>
            <person name="Schmutz J."/>
            <person name="Larimer F."/>
            <person name="Land M."/>
            <person name="Hauser L."/>
            <person name="Kyrpides N."/>
            <person name="Kim E."/>
            <person name="Karls A.C."/>
            <person name="Bartlett D."/>
            <person name="Higgins B.P."/>
            <person name="Richardson P."/>
        </authorList>
    </citation>
    <scope>NUCLEOTIDE SEQUENCE [LARGE SCALE GENOMIC DNA]</scope>
    <source>
        <strain>T6c / ATCC BAA-1087</strain>
    </source>
</reference>
<accession>Q15W98</accession>
<dbReference type="EC" id="2.5.1.78" evidence="1"/>
<dbReference type="EMBL" id="CP000388">
    <property type="protein sequence ID" value="ABG39840.1"/>
    <property type="molecule type" value="Genomic_DNA"/>
</dbReference>
<dbReference type="SMR" id="Q15W98"/>
<dbReference type="STRING" id="342610.Patl_1314"/>
<dbReference type="KEGG" id="pat:Patl_1314"/>
<dbReference type="eggNOG" id="COG0054">
    <property type="taxonomic scope" value="Bacteria"/>
</dbReference>
<dbReference type="HOGENOM" id="CLU_089358_1_1_6"/>
<dbReference type="OrthoDB" id="9809709at2"/>
<dbReference type="UniPathway" id="UPA00275">
    <property type="reaction ID" value="UER00404"/>
</dbReference>
<dbReference type="Proteomes" id="UP000001981">
    <property type="component" value="Chromosome"/>
</dbReference>
<dbReference type="GO" id="GO:0005829">
    <property type="term" value="C:cytosol"/>
    <property type="evidence" value="ECO:0007669"/>
    <property type="project" value="TreeGrafter"/>
</dbReference>
<dbReference type="GO" id="GO:0009349">
    <property type="term" value="C:riboflavin synthase complex"/>
    <property type="evidence" value="ECO:0007669"/>
    <property type="project" value="InterPro"/>
</dbReference>
<dbReference type="GO" id="GO:0000906">
    <property type="term" value="F:6,7-dimethyl-8-ribityllumazine synthase activity"/>
    <property type="evidence" value="ECO:0007669"/>
    <property type="project" value="UniProtKB-UniRule"/>
</dbReference>
<dbReference type="GO" id="GO:0009231">
    <property type="term" value="P:riboflavin biosynthetic process"/>
    <property type="evidence" value="ECO:0007669"/>
    <property type="project" value="UniProtKB-UniRule"/>
</dbReference>
<dbReference type="CDD" id="cd09209">
    <property type="entry name" value="Lumazine_synthase-I"/>
    <property type="match status" value="1"/>
</dbReference>
<dbReference type="FunFam" id="3.40.50.960:FF:000001">
    <property type="entry name" value="6,7-dimethyl-8-ribityllumazine synthase"/>
    <property type="match status" value="1"/>
</dbReference>
<dbReference type="Gene3D" id="3.40.50.960">
    <property type="entry name" value="Lumazine/riboflavin synthase"/>
    <property type="match status" value="1"/>
</dbReference>
<dbReference type="HAMAP" id="MF_00178">
    <property type="entry name" value="Lumazine_synth"/>
    <property type="match status" value="1"/>
</dbReference>
<dbReference type="InterPro" id="IPR034964">
    <property type="entry name" value="LS"/>
</dbReference>
<dbReference type="InterPro" id="IPR002180">
    <property type="entry name" value="LS/RS"/>
</dbReference>
<dbReference type="InterPro" id="IPR036467">
    <property type="entry name" value="LS/RS_sf"/>
</dbReference>
<dbReference type="NCBIfam" id="TIGR00114">
    <property type="entry name" value="lumazine-synth"/>
    <property type="match status" value="1"/>
</dbReference>
<dbReference type="NCBIfam" id="NF000812">
    <property type="entry name" value="PRK00061.1-4"/>
    <property type="match status" value="1"/>
</dbReference>
<dbReference type="PANTHER" id="PTHR21058:SF0">
    <property type="entry name" value="6,7-DIMETHYL-8-RIBITYLLUMAZINE SYNTHASE"/>
    <property type="match status" value="1"/>
</dbReference>
<dbReference type="PANTHER" id="PTHR21058">
    <property type="entry name" value="6,7-DIMETHYL-8-RIBITYLLUMAZINE SYNTHASE DMRL SYNTHASE LUMAZINE SYNTHASE"/>
    <property type="match status" value="1"/>
</dbReference>
<dbReference type="Pfam" id="PF00885">
    <property type="entry name" value="DMRL_synthase"/>
    <property type="match status" value="1"/>
</dbReference>
<dbReference type="SUPFAM" id="SSF52121">
    <property type="entry name" value="Lumazine synthase"/>
    <property type="match status" value="1"/>
</dbReference>
<organism>
    <name type="scientific">Pseudoalteromonas atlantica (strain T6c / ATCC BAA-1087)</name>
    <dbReference type="NCBI Taxonomy" id="3042615"/>
    <lineage>
        <taxon>Bacteria</taxon>
        <taxon>Pseudomonadati</taxon>
        <taxon>Pseudomonadota</taxon>
        <taxon>Gammaproteobacteria</taxon>
        <taxon>Alteromonadales</taxon>
        <taxon>Alteromonadaceae</taxon>
        <taxon>Paraglaciecola</taxon>
    </lineage>
</organism>
<comment type="function">
    <text evidence="1">Catalyzes the formation of 6,7-dimethyl-8-ribityllumazine by condensation of 5-amino-6-(D-ribitylamino)uracil with 3,4-dihydroxy-2-butanone 4-phosphate. This is the penultimate step in the biosynthesis of riboflavin.</text>
</comment>
<comment type="catalytic activity">
    <reaction evidence="1">
        <text>(2S)-2-hydroxy-3-oxobutyl phosphate + 5-amino-6-(D-ribitylamino)uracil = 6,7-dimethyl-8-(1-D-ribityl)lumazine + phosphate + 2 H2O + H(+)</text>
        <dbReference type="Rhea" id="RHEA:26152"/>
        <dbReference type="ChEBI" id="CHEBI:15377"/>
        <dbReference type="ChEBI" id="CHEBI:15378"/>
        <dbReference type="ChEBI" id="CHEBI:15934"/>
        <dbReference type="ChEBI" id="CHEBI:43474"/>
        <dbReference type="ChEBI" id="CHEBI:58201"/>
        <dbReference type="ChEBI" id="CHEBI:58830"/>
        <dbReference type="EC" id="2.5.1.78"/>
    </reaction>
</comment>
<comment type="pathway">
    <text evidence="1">Cofactor biosynthesis; riboflavin biosynthesis; riboflavin from 2-hydroxy-3-oxobutyl phosphate and 5-amino-6-(D-ribitylamino)uracil: step 1/2.</text>
</comment>
<comment type="subunit">
    <text evidence="1">Forms an icosahedral capsid composed of 60 subunits, arranged as a dodecamer of pentamers.</text>
</comment>
<comment type="similarity">
    <text evidence="1">Belongs to the DMRL synthase family.</text>
</comment>
<evidence type="ECO:0000255" key="1">
    <source>
        <dbReference type="HAMAP-Rule" id="MF_00178"/>
    </source>
</evidence>
<name>RISB_PSEA6</name>
<feature type="chain" id="PRO_1000040485" description="6,7-dimethyl-8-ribityllumazine synthase">
    <location>
        <begin position="1"/>
        <end position="158"/>
    </location>
</feature>
<feature type="active site" description="Proton donor" evidence="1">
    <location>
        <position position="89"/>
    </location>
</feature>
<feature type="binding site" evidence="1">
    <location>
        <position position="22"/>
    </location>
    <ligand>
        <name>5-amino-6-(D-ribitylamino)uracil</name>
        <dbReference type="ChEBI" id="CHEBI:15934"/>
    </ligand>
</feature>
<feature type="binding site" evidence="1">
    <location>
        <begin position="57"/>
        <end position="59"/>
    </location>
    <ligand>
        <name>5-amino-6-(D-ribitylamino)uracil</name>
        <dbReference type="ChEBI" id="CHEBI:15934"/>
    </ligand>
</feature>
<feature type="binding site" evidence="1">
    <location>
        <begin position="81"/>
        <end position="83"/>
    </location>
    <ligand>
        <name>5-amino-6-(D-ribitylamino)uracil</name>
        <dbReference type="ChEBI" id="CHEBI:15934"/>
    </ligand>
</feature>
<feature type="binding site" evidence="1">
    <location>
        <begin position="86"/>
        <end position="87"/>
    </location>
    <ligand>
        <name>(2S)-2-hydroxy-3-oxobutyl phosphate</name>
        <dbReference type="ChEBI" id="CHEBI:58830"/>
    </ligand>
</feature>
<feature type="binding site" evidence="1">
    <location>
        <position position="114"/>
    </location>
    <ligand>
        <name>5-amino-6-(D-ribitylamino)uracil</name>
        <dbReference type="ChEBI" id="CHEBI:15934"/>
    </ligand>
</feature>
<feature type="binding site" evidence="1">
    <location>
        <position position="128"/>
    </location>
    <ligand>
        <name>(2S)-2-hydroxy-3-oxobutyl phosphate</name>
        <dbReference type="ChEBI" id="CHEBI:58830"/>
    </ligand>
</feature>
<sequence>MNIIEGNIRATGKKFALVVSRFNSFVVESLVEGALDTLERHGEVNSQDITLVRVPGAYELPIAAKKLAEKGTFDGIIALGAVIRGGTPHFEFVAGECNKGLAQVSLEFGIPVSFGVITTDSIEQAIERSGTKAGNKGAEAALGALEMVNVMANIEGAE</sequence>
<keyword id="KW-0686">Riboflavin biosynthesis</keyword>
<keyword id="KW-0808">Transferase</keyword>
<proteinExistence type="inferred from homology"/>
<protein>
    <recommendedName>
        <fullName evidence="1">6,7-dimethyl-8-ribityllumazine synthase</fullName>
        <shortName evidence="1">DMRL synthase</shortName>
        <shortName evidence="1">LS</shortName>
        <shortName evidence="1">Lumazine synthase</shortName>
        <ecNumber evidence="1">2.5.1.78</ecNumber>
    </recommendedName>
</protein>